<name>EFTU_LIMRJ</name>
<dbReference type="EC" id="3.6.5.3" evidence="2"/>
<dbReference type="EMBL" id="AP007281">
    <property type="protein sequence ID" value="BAG25144.1"/>
    <property type="molecule type" value="Genomic_DNA"/>
</dbReference>
<dbReference type="RefSeq" id="WP_003666836.1">
    <property type="nucleotide sequence ID" value="NC_010609.1"/>
</dbReference>
<dbReference type="SMR" id="B2G6R2"/>
<dbReference type="GeneID" id="77190802"/>
<dbReference type="KEGG" id="lrf:LAR_0628"/>
<dbReference type="HOGENOM" id="CLU_007265_0_1_9"/>
<dbReference type="GO" id="GO:0005829">
    <property type="term" value="C:cytosol"/>
    <property type="evidence" value="ECO:0007669"/>
    <property type="project" value="TreeGrafter"/>
</dbReference>
<dbReference type="GO" id="GO:0005525">
    <property type="term" value="F:GTP binding"/>
    <property type="evidence" value="ECO:0007669"/>
    <property type="project" value="UniProtKB-UniRule"/>
</dbReference>
<dbReference type="GO" id="GO:0003924">
    <property type="term" value="F:GTPase activity"/>
    <property type="evidence" value="ECO:0007669"/>
    <property type="project" value="InterPro"/>
</dbReference>
<dbReference type="GO" id="GO:0003746">
    <property type="term" value="F:translation elongation factor activity"/>
    <property type="evidence" value="ECO:0007669"/>
    <property type="project" value="UniProtKB-UniRule"/>
</dbReference>
<dbReference type="CDD" id="cd01884">
    <property type="entry name" value="EF_Tu"/>
    <property type="match status" value="1"/>
</dbReference>
<dbReference type="CDD" id="cd03697">
    <property type="entry name" value="EFTU_II"/>
    <property type="match status" value="1"/>
</dbReference>
<dbReference type="CDD" id="cd03707">
    <property type="entry name" value="EFTU_III"/>
    <property type="match status" value="1"/>
</dbReference>
<dbReference type="FunFam" id="2.40.30.10:FF:000001">
    <property type="entry name" value="Elongation factor Tu"/>
    <property type="match status" value="1"/>
</dbReference>
<dbReference type="FunFam" id="3.40.50.300:FF:000003">
    <property type="entry name" value="Elongation factor Tu"/>
    <property type="match status" value="1"/>
</dbReference>
<dbReference type="Gene3D" id="3.40.50.300">
    <property type="entry name" value="P-loop containing nucleotide triphosphate hydrolases"/>
    <property type="match status" value="1"/>
</dbReference>
<dbReference type="Gene3D" id="2.40.30.10">
    <property type="entry name" value="Translation factors"/>
    <property type="match status" value="2"/>
</dbReference>
<dbReference type="HAMAP" id="MF_00118_B">
    <property type="entry name" value="EF_Tu_B"/>
    <property type="match status" value="1"/>
</dbReference>
<dbReference type="InterPro" id="IPR041709">
    <property type="entry name" value="EF-Tu_GTP-bd"/>
</dbReference>
<dbReference type="InterPro" id="IPR050055">
    <property type="entry name" value="EF-Tu_GTPase"/>
</dbReference>
<dbReference type="InterPro" id="IPR004161">
    <property type="entry name" value="EFTu-like_2"/>
</dbReference>
<dbReference type="InterPro" id="IPR033720">
    <property type="entry name" value="EFTU_2"/>
</dbReference>
<dbReference type="InterPro" id="IPR031157">
    <property type="entry name" value="G_TR_CS"/>
</dbReference>
<dbReference type="InterPro" id="IPR027417">
    <property type="entry name" value="P-loop_NTPase"/>
</dbReference>
<dbReference type="InterPro" id="IPR005225">
    <property type="entry name" value="Small_GTP-bd"/>
</dbReference>
<dbReference type="InterPro" id="IPR000795">
    <property type="entry name" value="T_Tr_GTP-bd_dom"/>
</dbReference>
<dbReference type="InterPro" id="IPR009000">
    <property type="entry name" value="Transl_B-barrel_sf"/>
</dbReference>
<dbReference type="InterPro" id="IPR009001">
    <property type="entry name" value="Transl_elong_EF1A/Init_IF2_C"/>
</dbReference>
<dbReference type="InterPro" id="IPR004541">
    <property type="entry name" value="Transl_elong_EFTu/EF1A_bac/org"/>
</dbReference>
<dbReference type="InterPro" id="IPR004160">
    <property type="entry name" value="Transl_elong_EFTu/EF1A_C"/>
</dbReference>
<dbReference type="NCBIfam" id="TIGR00485">
    <property type="entry name" value="EF-Tu"/>
    <property type="match status" value="1"/>
</dbReference>
<dbReference type="NCBIfam" id="NF000766">
    <property type="entry name" value="PRK00049.1"/>
    <property type="match status" value="1"/>
</dbReference>
<dbReference type="NCBIfam" id="NF009372">
    <property type="entry name" value="PRK12735.1"/>
    <property type="match status" value="1"/>
</dbReference>
<dbReference type="NCBIfam" id="NF009373">
    <property type="entry name" value="PRK12736.1"/>
    <property type="match status" value="1"/>
</dbReference>
<dbReference type="NCBIfam" id="TIGR00231">
    <property type="entry name" value="small_GTP"/>
    <property type="match status" value="1"/>
</dbReference>
<dbReference type="PANTHER" id="PTHR43721:SF22">
    <property type="entry name" value="ELONGATION FACTOR TU, MITOCHONDRIAL"/>
    <property type="match status" value="1"/>
</dbReference>
<dbReference type="PANTHER" id="PTHR43721">
    <property type="entry name" value="ELONGATION FACTOR TU-RELATED"/>
    <property type="match status" value="1"/>
</dbReference>
<dbReference type="Pfam" id="PF00009">
    <property type="entry name" value="GTP_EFTU"/>
    <property type="match status" value="1"/>
</dbReference>
<dbReference type="Pfam" id="PF03144">
    <property type="entry name" value="GTP_EFTU_D2"/>
    <property type="match status" value="1"/>
</dbReference>
<dbReference type="Pfam" id="PF03143">
    <property type="entry name" value="GTP_EFTU_D3"/>
    <property type="match status" value="1"/>
</dbReference>
<dbReference type="PRINTS" id="PR00315">
    <property type="entry name" value="ELONGATNFCT"/>
</dbReference>
<dbReference type="SUPFAM" id="SSF50465">
    <property type="entry name" value="EF-Tu/eEF-1alpha/eIF2-gamma C-terminal domain"/>
    <property type="match status" value="1"/>
</dbReference>
<dbReference type="SUPFAM" id="SSF52540">
    <property type="entry name" value="P-loop containing nucleoside triphosphate hydrolases"/>
    <property type="match status" value="1"/>
</dbReference>
<dbReference type="SUPFAM" id="SSF50447">
    <property type="entry name" value="Translation proteins"/>
    <property type="match status" value="1"/>
</dbReference>
<dbReference type="PROSITE" id="PS00301">
    <property type="entry name" value="G_TR_1"/>
    <property type="match status" value="1"/>
</dbReference>
<dbReference type="PROSITE" id="PS51722">
    <property type="entry name" value="G_TR_2"/>
    <property type="match status" value="1"/>
</dbReference>
<comment type="function">
    <text evidence="2">GTP hydrolase that promotes the GTP-dependent binding of aminoacyl-tRNA to the A-site of ribosomes during protein biosynthesis.</text>
</comment>
<comment type="catalytic activity">
    <reaction evidence="2">
        <text>GTP + H2O = GDP + phosphate + H(+)</text>
        <dbReference type="Rhea" id="RHEA:19669"/>
        <dbReference type="ChEBI" id="CHEBI:15377"/>
        <dbReference type="ChEBI" id="CHEBI:15378"/>
        <dbReference type="ChEBI" id="CHEBI:37565"/>
        <dbReference type="ChEBI" id="CHEBI:43474"/>
        <dbReference type="ChEBI" id="CHEBI:58189"/>
        <dbReference type="EC" id="3.6.5.3"/>
    </reaction>
    <physiologicalReaction direction="left-to-right" evidence="2">
        <dbReference type="Rhea" id="RHEA:19670"/>
    </physiologicalReaction>
</comment>
<comment type="subunit">
    <text evidence="2">Monomer.</text>
</comment>
<comment type="subcellular location">
    <subcellularLocation>
        <location evidence="2">Cytoplasm</location>
    </subcellularLocation>
</comment>
<comment type="similarity">
    <text evidence="2">Belongs to the TRAFAC class translation factor GTPase superfamily. Classic translation factor GTPase family. EF-Tu/EF-1A subfamily.</text>
</comment>
<gene>
    <name evidence="2" type="primary">tuf</name>
    <name type="ordered locus">LAR_0628</name>
</gene>
<keyword id="KW-0963">Cytoplasm</keyword>
<keyword id="KW-0251">Elongation factor</keyword>
<keyword id="KW-0342">GTP-binding</keyword>
<keyword id="KW-0378">Hydrolase</keyword>
<keyword id="KW-0460">Magnesium</keyword>
<keyword id="KW-0479">Metal-binding</keyword>
<keyword id="KW-0547">Nucleotide-binding</keyword>
<keyword id="KW-0648">Protein biosynthesis</keyword>
<organism>
    <name type="scientific">Limosilactobacillus reuteri subsp. reuteri (strain JCM 1112)</name>
    <name type="common">Lactobacillus reuteri</name>
    <dbReference type="NCBI Taxonomy" id="557433"/>
    <lineage>
        <taxon>Bacteria</taxon>
        <taxon>Bacillati</taxon>
        <taxon>Bacillota</taxon>
        <taxon>Bacilli</taxon>
        <taxon>Lactobacillales</taxon>
        <taxon>Lactobacillaceae</taxon>
        <taxon>Limosilactobacillus</taxon>
    </lineage>
</organism>
<evidence type="ECO:0000250" key="1"/>
<evidence type="ECO:0000255" key="2">
    <source>
        <dbReference type="HAMAP-Rule" id="MF_00118"/>
    </source>
</evidence>
<sequence>MAEKEHYERTKPHVNIGTIGHVDHGKTTLTAAITKVLAAKGLAKAEDYADIDAAPEEKERGITINTAHVEYETEKRHYAHIDAPGHADYVKNMITGAAQMDGAILVVAATDGPMPQTREHILLARQVGVQYIVVFLNKTDLVDDDELVDLVEMEVRDLLSEYDFPGDDVPVVRGSALKALEGDPEQEKVILHLMDVIDDYIPTPKRPTDKPFMMPVEDVFTITGRGTVASGRIDRGTVKVGDEVEIVGLTEDVLKSTVTGLEMFHKTLDLGEAGDNVGVLLRGISHDQIQRGQVLAEPGSIQTHKNFKGEVYVMTKEEGGRHTPFFSNYRPQFYFHTTDVTGTIELPDGVEMVMPGDNVTFTVNLQKPVALEKGLKFTIREGGHTVGAGVVSDILD</sequence>
<protein>
    <recommendedName>
        <fullName evidence="2">Elongation factor Tu</fullName>
        <shortName evidence="2">EF-Tu</shortName>
        <ecNumber evidence="2">3.6.5.3</ecNumber>
    </recommendedName>
</protein>
<accession>B2G6R2</accession>
<feature type="chain" id="PRO_1000095071" description="Elongation factor Tu">
    <location>
        <begin position="1"/>
        <end position="396"/>
    </location>
</feature>
<feature type="domain" description="tr-type G">
    <location>
        <begin position="11"/>
        <end position="205"/>
    </location>
</feature>
<feature type="region of interest" description="G1" evidence="1">
    <location>
        <begin position="20"/>
        <end position="27"/>
    </location>
</feature>
<feature type="region of interest" description="G2" evidence="1">
    <location>
        <begin position="61"/>
        <end position="65"/>
    </location>
</feature>
<feature type="region of interest" description="G3" evidence="1">
    <location>
        <begin position="82"/>
        <end position="85"/>
    </location>
</feature>
<feature type="region of interest" description="G4" evidence="1">
    <location>
        <begin position="137"/>
        <end position="140"/>
    </location>
</feature>
<feature type="region of interest" description="G5" evidence="1">
    <location>
        <begin position="175"/>
        <end position="177"/>
    </location>
</feature>
<feature type="binding site" evidence="2">
    <location>
        <begin position="20"/>
        <end position="27"/>
    </location>
    <ligand>
        <name>GTP</name>
        <dbReference type="ChEBI" id="CHEBI:37565"/>
    </ligand>
</feature>
<feature type="binding site" evidence="2">
    <location>
        <position position="27"/>
    </location>
    <ligand>
        <name>Mg(2+)</name>
        <dbReference type="ChEBI" id="CHEBI:18420"/>
    </ligand>
</feature>
<feature type="binding site" evidence="2">
    <location>
        <begin position="82"/>
        <end position="86"/>
    </location>
    <ligand>
        <name>GTP</name>
        <dbReference type="ChEBI" id="CHEBI:37565"/>
    </ligand>
</feature>
<feature type="binding site" evidence="2">
    <location>
        <begin position="137"/>
        <end position="140"/>
    </location>
    <ligand>
        <name>GTP</name>
        <dbReference type="ChEBI" id="CHEBI:37565"/>
    </ligand>
</feature>
<proteinExistence type="inferred from homology"/>
<reference key="1">
    <citation type="journal article" date="2008" name="DNA Res.">
        <title>Comparative genome analysis of Lactobacillus reuteri and Lactobacillus fermentum reveal a genomic island for reuterin and cobalamin production.</title>
        <authorList>
            <person name="Morita H."/>
            <person name="Toh H."/>
            <person name="Fukuda S."/>
            <person name="Horikawa H."/>
            <person name="Oshima K."/>
            <person name="Suzuki T."/>
            <person name="Murakami M."/>
            <person name="Hisamatsu S."/>
            <person name="Kato Y."/>
            <person name="Takizawa T."/>
            <person name="Fukuoka H."/>
            <person name="Yoshimura T."/>
            <person name="Itoh K."/>
            <person name="O'Sullivan D.J."/>
            <person name="McKay L.L."/>
            <person name="Ohno H."/>
            <person name="Kikuchi J."/>
            <person name="Masaoka T."/>
            <person name="Hattori M."/>
        </authorList>
    </citation>
    <scope>NUCLEOTIDE SEQUENCE [LARGE SCALE GENOMIC DNA]</scope>
    <source>
        <strain>JCM 1112</strain>
    </source>
</reference>